<keyword id="KW-0233">DNA recombination</keyword>
<keyword id="KW-0238">DNA-binding</keyword>
<keyword id="KW-1185">Reference proteome</keyword>
<keyword id="KW-0804">Transcription</keyword>
<keyword id="KW-0805">Transcription regulation</keyword>
<keyword id="KW-0810">Translation regulation</keyword>
<comment type="function">
    <text evidence="1">This protein is one of the two subunits of integration host factor, a specific DNA-binding protein that functions in genetic recombination as well as in transcriptional and translational control.</text>
</comment>
<comment type="subunit">
    <text evidence="1">Heterodimer of an alpha and a beta chain.</text>
</comment>
<comment type="similarity">
    <text evidence="1">Belongs to the bacterial histone-like protein family.</text>
</comment>
<evidence type="ECO:0000255" key="1">
    <source>
        <dbReference type="HAMAP-Rule" id="MF_00381"/>
    </source>
</evidence>
<feature type="chain" id="PRO_1000205699" description="Integration host factor subunit beta">
    <location>
        <begin position="1"/>
        <end position="98"/>
    </location>
</feature>
<organism>
    <name type="scientific">Teredinibacter turnerae (strain ATCC 39867 / T7901)</name>
    <dbReference type="NCBI Taxonomy" id="377629"/>
    <lineage>
        <taxon>Bacteria</taxon>
        <taxon>Pseudomonadati</taxon>
        <taxon>Pseudomonadota</taxon>
        <taxon>Gammaproteobacteria</taxon>
        <taxon>Cellvibrionales</taxon>
        <taxon>Cellvibrionaceae</taxon>
        <taxon>Teredinibacter</taxon>
    </lineage>
</organism>
<proteinExistence type="inferred from homology"/>
<accession>C5BSK5</accession>
<sequence>MTKSELIERIAERQDQLSAKDIELAVKLILEYMSQCLANGDRIEIRGFGSFSLHYRAPRTGRNPKTGESVELEGKFVPHFKPGKEMRDRVNESLEELP</sequence>
<dbReference type="EMBL" id="CP001614">
    <property type="protein sequence ID" value="ACR14357.1"/>
    <property type="molecule type" value="Genomic_DNA"/>
</dbReference>
<dbReference type="RefSeq" id="WP_015820472.1">
    <property type="nucleotide sequence ID" value="NC_012997.1"/>
</dbReference>
<dbReference type="SMR" id="C5BSK5"/>
<dbReference type="STRING" id="377629.TERTU_1399"/>
<dbReference type="GeneID" id="58409121"/>
<dbReference type="GeneID" id="93857291"/>
<dbReference type="KEGG" id="ttu:TERTU_1399"/>
<dbReference type="eggNOG" id="COG0776">
    <property type="taxonomic scope" value="Bacteria"/>
</dbReference>
<dbReference type="HOGENOM" id="CLU_105066_2_0_6"/>
<dbReference type="OrthoDB" id="9804203at2"/>
<dbReference type="Proteomes" id="UP000009080">
    <property type="component" value="Chromosome"/>
</dbReference>
<dbReference type="GO" id="GO:0005694">
    <property type="term" value="C:chromosome"/>
    <property type="evidence" value="ECO:0007669"/>
    <property type="project" value="InterPro"/>
</dbReference>
<dbReference type="GO" id="GO:0005829">
    <property type="term" value="C:cytosol"/>
    <property type="evidence" value="ECO:0007669"/>
    <property type="project" value="TreeGrafter"/>
</dbReference>
<dbReference type="GO" id="GO:0003677">
    <property type="term" value="F:DNA binding"/>
    <property type="evidence" value="ECO:0007669"/>
    <property type="project" value="UniProtKB-UniRule"/>
</dbReference>
<dbReference type="GO" id="GO:0030527">
    <property type="term" value="F:structural constituent of chromatin"/>
    <property type="evidence" value="ECO:0007669"/>
    <property type="project" value="InterPro"/>
</dbReference>
<dbReference type="GO" id="GO:0006310">
    <property type="term" value="P:DNA recombination"/>
    <property type="evidence" value="ECO:0007669"/>
    <property type="project" value="UniProtKB-UniRule"/>
</dbReference>
<dbReference type="GO" id="GO:0006355">
    <property type="term" value="P:regulation of DNA-templated transcription"/>
    <property type="evidence" value="ECO:0007669"/>
    <property type="project" value="UniProtKB-UniRule"/>
</dbReference>
<dbReference type="GO" id="GO:0006417">
    <property type="term" value="P:regulation of translation"/>
    <property type="evidence" value="ECO:0007669"/>
    <property type="project" value="UniProtKB-UniRule"/>
</dbReference>
<dbReference type="CDD" id="cd13836">
    <property type="entry name" value="IHF_B"/>
    <property type="match status" value="1"/>
</dbReference>
<dbReference type="FunFam" id="4.10.520.10:FF:000003">
    <property type="entry name" value="Integration host factor subunit beta"/>
    <property type="match status" value="1"/>
</dbReference>
<dbReference type="Gene3D" id="4.10.520.10">
    <property type="entry name" value="IHF-like DNA-binding proteins"/>
    <property type="match status" value="1"/>
</dbReference>
<dbReference type="HAMAP" id="MF_00381">
    <property type="entry name" value="IHF_beta"/>
    <property type="match status" value="1"/>
</dbReference>
<dbReference type="InterPro" id="IPR000119">
    <property type="entry name" value="Hist_DNA-bd"/>
</dbReference>
<dbReference type="InterPro" id="IPR020816">
    <property type="entry name" value="Histone-like_DNA-bd_CS"/>
</dbReference>
<dbReference type="InterPro" id="IPR010992">
    <property type="entry name" value="IHF-like_DNA-bd_dom_sf"/>
</dbReference>
<dbReference type="InterPro" id="IPR005685">
    <property type="entry name" value="IHF_beta"/>
</dbReference>
<dbReference type="NCBIfam" id="TIGR00988">
    <property type="entry name" value="hip"/>
    <property type="match status" value="1"/>
</dbReference>
<dbReference type="NCBIfam" id="NF001222">
    <property type="entry name" value="PRK00199.1"/>
    <property type="match status" value="1"/>
</dbReference>
<dbReference type="PANTHER" id="PTHR33175">
    <property type="entry name" value="DNA-BINDING PROTEIN HU"/>
    <property type="match status" value="1"/>
</dbReference>
<dbReference type="PANTHER" id="PTHR33175:SF5">
    <property type="entry name" value="INTEGRATION HOST FACTOR SUBUNIT BETA"/>
    <property type="match status" value="1"/>
</dbReference>
<dbReference type="Pfam" id="PF00216">
    <property type="entry name" value="Bac_DNA_binding"/>
    <property type="match status" value="1"/>
</dbReference>
<dbReference type="PRINTS" id="PR01727">
    <property type="entry name" value="DNABINDINGHU"/>
</dbReference>
<dbReference type="SMART" id="SM00411">
    <property type="entry name" value="BHL"/>
    <property type="match status" value="1"/>
</dbReference>
<dbReference type="SUPFAM" id="SSF47729">
    <property type="entry name" value="IHF-like DNA-binding proteins"/>
    <property type="match status" value="1"/>
</dbReference>
<dbReference type="PROSITE" id="PS00045">
    <property type="entry name" value="HISTONE_LIKE"/>
    <property type="match status" value="1"/>
</dbReference>
<name>IHFB_TERTT</name>
<gene>
    <name evidence="1" type="primary">ihfB</name>
    <name evidence="1" type="synonym">himD</name>
    <name type="ordered locus">TERTU_1399</name>
</gene>
<reference key="1">
    <citation type="journal article" date="2009" name="PLoS ONE">
        <title>The complete genome of Teredinibacter turnerae T7901: an intracellular endosymbiont of marine wood-boring bivalves (shipworms).</title>
        <authorList>
            <person name="Yang J.C."/>
            <person name="Madupu R."/>
            <person name="Durkin A.S."/>
            <person name="Ekborg N.A."/>
            <person name="Pedamallu C.S."/>
            <person name="Hostetler J.B."/>
            <person name="Radune D."/>
            <person name="Toms B.S."/>
            <person name="Henrissat B."/>
            <person name="Coutinho P.M."/>
            <person name="Schwarz S."/>
            <person name="Field L."/>
            <person name="Trindade-Silva A.E."/>
            <person name="Soares C.A.G."/>
            <person name="Elshahawi S."/>
            <person name="Hanora A."/>
            <person name="Schmidt E.W."/>
            <person name="Haygood M.G."/>
            <person name="Posfai J."/>
            <person name="Benner J."/>
            <person name="Madinger C."/>
            <person name="Nove J."/>
            <person name="Anton B."/>
            <person name="Chaudhary K."/>
            <person name="Foster J."/>
            <person name="Holman A."/>
            <person name="Kumar S."/>
            <person name="Lessard P.A."/>
            <person name="Luyten Y.A."/>
            <person name="Slatko B."/>
            <person name="Wood N."/>
            <person name="Wu B."/>
            <person name="Teplitski M."/>
            <person name="Mougous J.D."/>
            <person name="Ward N."/>
            <person name="Eisen J.A."/>
            <person name="Badger J.H."/>
            <person name="Distel D.L."/>
        </authorList>
    </citation>
    <scope>NUCLEOTIDE SEQUENCE [LARGE SCALE GENOMIC DNA]</scope>
    <source>
        <strain>ATCC 39867 / T7901</strain>
    </source>
</reference>
<protein>
    <recommendedName>
        <fullName evidence="1">Integration host factor subunit beta</fullName>
        <shortName evidence="1">IHF-beta</shortName>
    </recommendedName>
</protein>